<accession>C4Z114</accession>
<feature type="chain" id="PRO_1000204627" description="Glutamate racemase">
    <location>
        <begin position="1"/>
        <end position="265"/>
    </location>
</feature>
<feature type="active site" description="Proton donor/acceptor" evidence="1">
    <location>
        <position position="70"/>
    </location>
</feature>
<feature type="active site" description="Proton donor/acceptor" evidence="1">
    <location>
        <position position="182"/>
    </location>
</feature>
<feature type="binding site" evidence="1">
    <location>
        <begin position="7"/>
        <end position="8"/>
    </location>
    <ligand>
        <name>substrate</name>
    </ligand>
</feature>
<feature type="binding site" evidence="1">
    <location>
        <begin position="39"/>
        <end position="40"/>
    </location>
    <ligand>
        <name>substrate</name>
    </ligand>
</feature>
<feature type="binding site" evidence="1">
    <location>
        <begin position="71"/>
        <end position="72"/>
    </location>
    <ligand>
        <name>substrate</name>
    </ligand>
</feature>
<feature type="binding site" evidence="1">
    <location>
        <begin position="183"/>
        <end position="184"/>
    </location>
    <ligand>
        <name>substrate</name>
    </ligand>
</feature>
<protein>
    <recommendedName>
        <fullName evidence="1">Glutamate racemase</fullName>
        <ecNumber evidence="1">5.1.1.3</ecNumber>
    </recommendedName>
</protein>
<gene>
    <name evidence="1" type="primary">murI</name>
    <name type="ordered locus">EUBELI_01280</name>
</gene>
<sequence>MKIGIFDSGIGGLSVLHQAMITMPEADYIFYADVDNVPYGEKTREEVRKLVDHAVGFLVDKGCQAIVLACNTATSAAISYLREKYKLPIIGIEPAVKPAVEHTSETGRRVMVVSTPVTAKGEKLKRLIDKYDDKHVVDVVALPKLVRFAQDDDFDSSDVTDYLKCEFAPYNLNDYSELVLGCTHFNYFKDSFAKLFPDDLEMVDGNTGVSNNLKNTVMKKGIFTEKDKGKKGSVEYYYSDRKMESEAEMKHIKKLHERLERMRQI</sequence>
<proteinExistence type="inferred from homology"/>
<keyword id="KW-0133">Cell shape</keyword>
<keyword id="KW-0961">Cell wall biogenesis/degradation</keyword>
<keyword id="KW-0413">Isomerase</keyword>
<keyword id="KW-0573">Peptidoglycan synthesis</keyword>
<keyword id="KW-1185">Reference proteome</keyword>
<evidence type="ECO:0000255" key="1">
    <source>
        <dbReference type="HAMAP-Rule" id="MF_00258"/>
    </source>
</evidence>
<reference key="1">
    <citation type="journal article" date="2009" name="Proc. Natl. Acad. Sci. U.S.A.">
        <title>Characterizing a model human gut microbiota composed of members of its two dominant bacterial phyla.</title>
        <authorList>
            <person name="Mahowald M.A."/>
            <person name="Rey F.E."/>
            <person name="Seedorf H."/>
            <person name="Turnbaugh P.J."/>
            <person name="Fulton R.S."/>
            <person name="Wollam A."/>
            <person name="Shah N."/>
            <person name="Wang C."/>
            <person name="Magrini V."/>
            <person name="Wilson R.K."/>
            <person name="Cantarel B.L."/>
            <person name="Coutinho P.M."/>
            <person name="Henrissat B."/>
            <person name="Crock L.W."/>
            <person name="Russell A."/>
            <person name="Verberkmoes N.C."/>
            <person name="Hettich R.L."/>
            <person name="Gordon J.I."/>
        </authorList>
    </citation>
    <scope>NUCLEOTIDE SEQUENCE [LARGE SCALE GENOMIC DNA]</scope>
    <source>
        <strain>ATCC 27750 / DSM 3376 / VPI C15-48 / C15-B4</strain>
    </source>
</reference>
<organism>
    <name type="scientific">Lachnospira eligens (strain ATCC 27750 / DSM 3376 / VPI C15-48 / C15-B4)</name>
    <name type="common">Eubacterium eligens</name>
    <dbReference type="NCBI Taxonomy" id="515620"/>
    <lineage>
        <taxon>Bacteria</taxon>
        <taxon>Bacillati</taxon>
        <taxon>Bacillota</taxon>
        <taxon>Clostridia</taxon>
        <taxon>Lachnospirales</taxon>
        <taxon>Lachnospiraceae</taxon>
        <taxon>Lachnospira</taxon>
    </lineage>
</organism>
<name>MURI_LACE2</name>
<dbReference type="EC" id="5.1.1.3" evidence="1"/>
<dbReference type="EMBL" id="CP001104">
    <property type="protein sequence ID" value="ACR72277.1"/>
    <property type="molecule type" value="Genomic_DNA"/>
</dbReference>
<dbReference type="RefSeq" id="WP_012739512.1">
    <property type="nucleotide sequence ID" value="NC_012778.1"/>
</dbReference>
<dbReference type="SMR" id="C4Z114"/>
<dbReference type="STRING" id="515620.EUBELI_01280"/>
<dbReference type="GeneID" id="41355997"/>
<dbReference type="KEGG" id="eel:EUBELI_01280"/>
<dbReference type="eggNOG" id="COG0796">
    <property type="taxonomic scope" value="Bacteria"/>
</dbReference>
<dbReference type="HOGENOM" id="CLU_052344_1_0_9"/>
<dbReference type="UniPathway" id="UPA00219"/>
<dbReference type="Proteomes" id="UP000001476">
    <property type="component" value="Chromosome"/>
</dbReference>
<dbReference type="GO" id="GO:0008881">
    <property type="term" value="F:glutamate racemase activity"/>
    <property type="evidence" value="ECO:0007669"/>
    <property type="project" value="UniProtKB-UniRule"/>
</dbReference>
<dbReference type="GO" id="GO:0071555">
    <property type="term" value="P:cell wall organization"/>
    <property type="evidence" value="ECO:0007669"/>
    <property type="project" value="UniProtKB-KW"/>
</dbReference>
<dbReference type="GO" id="GO:0009252">
    <property type="term" value="P:peptidoglycan biosynthetic process"/>
    <property type="evidence" value="ECO:0007669"/>
    <property type="project" value="UniProtKB-UniRule"/>
</dbReference>
<dbReference type="GO" id="GO:0008360">
    <property type="term" value="P:regulation of cell shape"/>
    <property type="evidence" value="ECO:0007669"/>
    <property type="project" value="UniProtKB-KW"/>
</dbReference>
<dbReference type="Gene3D" id="3.40.50.1860">
    <property type="match status" value="2"/>
</dbReference>
<dbReference type="HAMAP" id="MF_00258">
    <property type="entry name" value="Glu_racemase"/>
    <property type="match status" value="1"/>
</dbReference>
<dbReference type="InterPro" id="IPR015942">
    <property type="entry name" value="Asp/Glu/hydantoin_racemase"/>
</dbReference>
<dbReference type="InterPro" id="IPR001920">
    <property type="entry name" value="Asp/Glu_race"/>
</dbReference>
<dbReference type="InterPro" id="IPR018187">
    <property type="entry name" value="Asp/Glu_racemase_AS_1"/>
</dbReference>
<dbReference type="InterPro" id="IPR004391">
    <property type="entry name" value="Glu_race"/>
</dbReference>
<dbReference type="NCBIfam" id="TIGR00067">
    <property type="entry name" value="glut_race"/>
    <property type="match status" value="1"/>
</dbReference>
<dbReference type="PANTHER" id="PTHR21198">
    <property type="entry name" value="GLUTAMATE RACEMASE"/>
    <property type="match status" value="1"/>
</dbReference>
<dbReference type="PANTHER" id="PTHR21198:SF3">
    <property type="entry name" value="GLUTAMATE RACEMASE"/>
    <property type="match status" value="1"/>
</dbReference>
<dbReference type="Pfam" id="PF01177">
    <property type="entry name" value="Asp_Glu_race"/>
    <property type="match status" value="1"/>
</dbReference>
<dbReference type="SUPFAM" id="SSF53681">
    <property type="entry name" value="Aspartate/glutamate racemase"/>
    <property type="match status" value="2"/>
</dbReference>
<dbReference type="PROSITE" id="PS00923">
    <property type="entry name" value="ASP_GLU_RACEMASE_1"/>
    <property type="match status" value="1"/>
</dbReference>
<comment type="function">
    <text evidence="1">Provides the (R)-glutamate required for cell wall biosynthesis.</text>
</comment>
<comment type="catalytic activity">
    <reaction evidence="1">
        <text>L-glutamate = D-glutamate</text>
        <dbReference type="Rhea" id="RHEA:12813"/>
        <dbReference type="ChEBI" id="CHEBI:29985"/>
        <dbReference type="ChEBI" id="CHEBI:29986"/>
        <dbReference type="EC" id="5.1.1.3"/>
    </reaction>
</comment>
<comment type="pathway">
    <text evidence="1">Cell wall biogenesis; peptidoglycan biosynthesis.</text>
</comment>
<comment type="similarity">
    <text evidence="1">Belongs to the aspartate/glutamate racemases family.</text>
</comment>